<reference key="1">
    <citation type="journal article" date="2009" name="PLoS Genet.">
        <title>The complete genome and proteome of Laribacter hongkongensis reveal potential mechanisms for adaptations to different temperatures and habitats.</title>
        <authorList>
            <person name="Woo P.C.Y."/>
            <person name="Lau S.K.P."/>
            <person name="Tse H."/>
            <person name="Teng J.L.L."/>
            <person name="Curreem S.O."/>
            <person name="Tsang A.K.L."/>
            <person name="Fan R.Y.Y."/>
            <person name="Wong G.K.M."/>
            <person name="Huang Y."/>
            <person name="Loman N.J."/>
            <person name="Snyder L.A.S."/>
            <person name="Cai J.J."/>
            <person name="Huang J.-D."/>
            <person name="Mak W."/>
            <person name="Pallen M.J."/>
            <person name="Lok S."/>
            <person name="Yuen K.-Y."/>
        </authorList>
    </citation>
    <scope>NUCLEOTIDE SEQUENCE [LARGE SCALE GENOMIC DNA]</scope>
    <source>
        <strain>HLHK9</strain>
    </source>
</reference>
<keyword id="KW-0963">Cytoplasm</keyword>
<keyword id="KW-1185">Reference proteome</keyword>
<keyword id="KW-0690">Ribosome biogenesis</keyword>
<accession>C1D8X4</accession>
<organism>
    <name type="scientific">Laribacter hongkongensis (strain HLHK9)</name>
    <dbReference type="NCBI Taxonomy" id="557598"/>
    <lineage>
        <taxon>Bacteria</taxon>
        <taxon>Pseudomonadati</taxon>
        <taxon>Pseudomonadota</taxon>
        <taxon>Betaproteobacteria</taxon>
        <taxon>Neisseriales</taxon>
        <taxon>Aquaspirillaceae</taxon>
        <taxon>Laribacter</taxon>
    </lineage>
</organism>
<sequence>MDVRTLLETTLSGLGYELVDFELGHGGLMRVFIDAPAGIALDDCVKVSNHLTRLFTVENIDYDRLEVSSPGLDRPLTREADYARFAGERVRIKTRLPIGERKKFAGTLVGLADGQVELDIDGERVAIPLASIDKARLDPQF</sequence>
<comment type="function">
    <text evidence="1">Required for maturation of 30S ribosomal subunits.</text>
</comment>
<comment type="subcellular location">
    <subcellularLocation>
        <location evidence="1">Cytoplasm</location>
    </subcellularLocation>
</comment>
<comment type="similarity">
    <text evidence="1">Belongs to the RimP family.</text>
</comment>
<feature type="chain" id="PRO_1000149795" description="Ribosome maturation factor RimP">
    <location>
        <begin position="1"/>
        <end position="141"/>
    </location>
</feature>
<protein>
    <recommendedName>
        <fullName evidence="1">Ribosome maturation factor RimP</fullName>
    </recommendedName>
</protein>
<evidence type="ECO:0000255" key="1">
    <source>
        <dbReference type="HAMAP-Rule" id="MF_01077"/>
    </source>
</evidence>
<name>RIMP_LARHH</name>
<gene>
    <name evidence="1" type="primary">rimP</name>
    <name type="ordered locus">LHK_01930</name>
</gene>
<proteinExistence type="inferred from homology"/>
<dbReference type="EMBL" id="CP001154">
    <property type="protein sequence ID" value="ACO74914.1"/>
    <property type="molecule type" value="Genomic_DNA"/>
</dbReference>
<dbReference type="RefSeq" id="WP_012697400.1">
    <property type="nucleotide sequence ID" value="NC_012559.1"/>
</dbReference>
<dbReference type="SMR" id="C1D8X4"/>
<dbReference type="STRING" id="557598.LHK_01930"/>
<dbReference type="GeneID" id="75108696"/>
<dbReference type="KEGG" id="lhk:LHK_01930"/>
<dbReference type="eggNOG" id="COG0779">
    <property type="taxonomic scope" value="Bacteria"/>
</dbReference>
<dbReference type="HOGENOM" id="CLU_070525_1_0_4"/>
<dbReference type="Proteomes" id="UP000002010">
    <property type="component" value="Chromosome"/>
</dbReference>
<dbReference type="GO" id="GO:0005829">
    <property type="term" value="C:cytosol"/>
    <property type="evidence" value="ECO:0007669"/>
    <property type="project" value="TreeGrafter"/>
</dbReference>
<dbReference type="GO" id="GO:0000028">
    <property type="term" value="P:ribosomal small subunit assembly"/>
    <property type="evidence" value="ECO:0007669"/>
    <property type="project" value="TreeGrafter"/>
</dbReference>
<dbReference type="GO" id="GO:0006412">
    <property type="term" value="P:translation"/>
    <property type="evidence" value="ECO:0007669"/>
    <property type="project" value="TreeGrafter"/>
</dbReference>
<dbReference type="CDD" id="cd01734">
    <property type="entry name" value="YlxS_C"/>
    <property type="match status" value="1"/>
</dbReference>
<dbReference type="Gene3D" id="2.30.30.180">
    <property type="entry name" value="Ribosome maturation factor RimP, C-terminal domain"/>
    <property type="match status" value="1"/>
</dbReference>
<dbReference type="Gene3D" id="3.30.300.70">
    <property type="entry name" value="RimP-like superfamily, N-terminal"/>
    <property type="match status" value="1"/>
</dbReference>
<dbReference type="HAMAP" id="MF_01077">
    <property type="entry name" value="RimP"/>
    <property type="match status" value="1"/>
</dbReference>
<dbReference type="InterPro" id="IPR003728">
    <property type="entry name" value="Ribosome_maturation_RimP"/>
</dbReference>
<dbReference type="InterPro" id="IPR028998">
    <property type="entry name" value="RimP_C"/>
</dbReference>
<dbReference type="InterPro" id="IPR036847">
    <property type="entry name" value="RimP_C_sf"/>
</dbReference>
<dbReference type="InterPro" id="IPR028989">
    <property type="entry name" value="RimP_N"/>
</dbReference>
<dbReference type="InterPro" id="IPR035956">
    <property type="entry name" value="RimP_N_sf"/>
</dbReference>
<dbReference type="NCBIfam" id="NF000929">
    <property type="entry name" value="PRK00092.2-1"/>
    <property type="match status" value="1"/>
</dbReference>
<dbReference type="PANTHER" id="PTHR33867">
    <property type="entry name" value="RIBOSOME MATURATION FACTOR RIMP"/>
    <property type="match status" value="1"/>
</dbReference>
<dbReference type="PANTHER" id="PTHR33867:SF1">
    <property type="entry name" value="RIBOSOME MATURATION FACTOR RIMP"/>
    <property type="match status" value="1"/>
</dbReference>
<dbReference type="Pfam" id="PF17384">
    <property type="entry name" value="DUF150_C"/>
    <property type="match status" value="1"/>
</dbReference>
<dbReference type="Pfam" id="PF02576">
    <property type="entry name" value="RimP_N"/>
    <property type="match status" value="1"/>
</dbReference>
<dbReference type="SUPFAM" id="SSF74942">
    <property type="entry name" value="YhbC-like, C-terminal domain"/>
    <property type="match status" value="1"/>
</dbReference>
<dbReference type="SUPFAM" id="SSF75420">
    <property type="entry name" value="YhbC-like, N-terminal domain"/>
    <property type="match status" value="1"/>
</dbReference>